<evidence type="ECO:0000255" key="1">
    <source>
        <dbReference type="HAMAP-Rule" id="MF_01876"/>
    </source>
</evidence>
<gene>
    <name evidence="1" type="primary">psuG</name>
    <name type="ordered locus">TT_C0813</name>
</gene>
<organism>
    <name type="scientific">Thermus thermophilus (strain ATCC BAA-163 / DSM 7039 / HB27)</name>
    <dbReference type="NCBI Taxonomy" id="262724"/>
    <lineage>
        <taxon>Bacteria</taxon>
        <taxon>Thermotogati</taxon>
        <taxon>Deinococcota</taxon>
        <taxon>Deinococci</taxon>
        <taxon>Thermales</taxon>
        <taxon>Thermaceae</taxon>
        <taxon>Thermus</taxon>
    </lineage>
</organism>
<feature type="chain" id="PRO_0000390559" description="Pseudouridine-5'-phosphate glycosidase">
    <location>
        <begin position="1"/>
        <end position="281"/>
    </location>
</feature>
<feature type="active site" description="Proton donor" evidence="1">
    <location>
        <position position="9"/>
    </location>
</feature>
<feature type="active site" description="Nucleophile" evidence="1">
    <location>
        <position position="139"/>
    </location>
</feature>
<feature type="binding site" evidence="1">
    <location>
        <position position="69"/>
    </location>
    <ligand>
        <name>substrate</name>
    </ligand>
</feature>
<feature type="binding site" evidence="1">
    <location>
        <position position="89"/>
    </location>
    <ligand>
        <name>substrate</name>
    </ligand>
</feature>
<feature type="binding site" evidence="1">
    <location>
        <position position="118"/>
    </location>
    <ligand>
        <name>Mn(2+)</name>
        <dbReference type="ChEBI" id="CHEBI:29035"/>
    </ligand>
</feature>
<feature type="binding site" evidence="1">
    <location>
        <begin position="120"/>
        <end position="122"/>
    </location>
    <ligand>
        <name>substrate</name>
    </ligand>
</feature>
<sequence>MREPRVALESAVLTHGLPYPLNLEVALALEEAVREEGATPKTIALVRGEVRVGLSPEEMEALAAGGAEKASLWNLAALLAQGRSAGTTVAATVHLAHLHGIPVFATGGIGGVHPEPYDESADLVALSRTPILVVSSGPKAILDLRATLERLETLGVSVVGYRTDRLPAFFSPDSPFPVPARVDTPMEAARVYLRARALGLGGVLLVNPVSQGLPYEQVALWVEEAGRMAAREGVFGKALTPYLLRKLSELSSGETDRVNRRLLLENARLAARVALALAGLE</sequence>
<accession>Q72JF9</accession>
<reference key="1">
    <citation type="journal article" date="2004" name="Nat. Biotechnol.">
        <title>The genome sequence of the extreme thermophile Thermus thermophilus.</title>
        <authorList>
            <person name="Henne A."/>
            <person name="Brueggemann H."/>
            <person name="Raasch C."/>
            <person name="Wiezer A."/>
            <person name="Hartsch T."/>
            <person name="Liesegang H."/>
            <person name="Johann A."/>
            <person name="Lienard T."/>
            <person name="Gohl O."/>
            <person name="Martinez-Arias R."/>
            <person name="Jacobi C."/>
            <person name="Starkuviene V."/>
            <person name="Schlenczeck S."/>
            <person name="Dencker S."/>
            <person name="Huber R."/>
            <person name="Klenk H.-P."/>
            <person name="Kramer W."/>
            <person name="Merkl R."/>
            <person name="Gottschalk G."/>
            <person name="Fritz H.-J."/>
        </authorList>
    </citation>
    <scope>NUCLEOTIDE SEQUENCE [LARGE SCALE GENOMIC DNA]</scope>
    <source>
        <strain>ATCC BAA-163 / DSM 7039 / HB27</strain>
    </source>
</reference>
<name>PSUG_THET2</name>
<keyword id="KW-0326">Glycosidase</keyword>
<keyword id="KW-0378">Hydrolase</keyword>
<keyword id="KW-0456">Lyase</keyword>
<keyword id="KW-0464">Manganese</keyword>
<keyword id="KW-0479">Metal-binding</keyword>
<dbReference type="EC" id="4.2.1.70" evidence="1"/>
<dbReference type="EMBL" id="AE017221">
    <property type="protein sequence ID" value="AAS81159.1"/>
    <property type="molecule type" value="Genomic_DNA"/>
</dbReference>
<dbReference type="RefSeq" id="WP_011173245.1">
    <property type="nucleotide sequence ID" value="NC_005835.1"/>
</dbReference>
<dbReference type="SMR" id="Q72JF9"/>
<dbReference type="KEGG" id="tth:TT_C0813"/>
<dbReference type="eggNOG" id="COG2313">
    <property type="taxonomic scope" value="Bacteria"/>
</dbReference>
<dbReference type="HOGENOM" id="CLU_012201_0_1_0"/>
<dbReference type="OrthoDB" id="9805870at2"/>
<dbReference type="Proteomes" id="UP000000592">
    <property type="component" value="Chromosome"/>
</dbReference>
<dbReference type="GO" id="GO:0005737">
    <property type="term" value="C:cytoplasm"/>
    <property type="evidence" value="ECO:0007669"/>
    <property type="project" value="TreeGrafter"/>
</dbReference>
<dbReference type="GO" id="GO:0016798">
    <property type="term" value="F:hydrolase activity, acting on glycosyl bonds"/>
    <property type="evidence" value="ECO:0007669"/>
    <property type="project" value="UniProtKB-KW"/>
</dbReference>
<dbReference type="GO" id="GO:0046872">
    <property type="term" value="F:metal ion binding"/>
    <property type="evidence" value="ECO:0007669"/>
    <property type="project" value="UniProtKB-KW"/>
</dbReference>
<dbReference type="GO" id="GO:0004730">
    <property type="term" value="F:pseudouridylate synthase activity"/>
    <property type="evidence" value="ECO:0007669"/>
    <property type="project" value="UniProtKB-UniRule"/>
</dbReference>
<dbReference type="GO" id="GO:0046113">
    <property type="term" value="P:nucleobase catabolic process"/>
    <property type="evidence" value="ECO:0007669"/>
    <property type="project" value="UniProtKB-UniRule"/>
</dbReference>
<dbReference type="Gene3D" id="3.40.1790.10">
    <property type="entry name" value="Indigoidine synthase domain"/>
    <property type="match status" value="1"/>
</dbReference>
<dbReference type="HAMAP" id="MF_01876">
    <property type="entry name" value="PsiMP_glycosidase"/>
    <property type="match status" value="1"/>
</dbReference>
<dbReference type="InterPro" id="IPR022830">
    <property type="entry name" value="Indigdn_synthA-like"/>
</dbReference>
<dbReference type="InterPro" id="IPR007342">
    <property type="entry name" value="PsuG"/>
</dbReference>
<dbReference type="PANTHER" id="PTHR42909:SF1">
    <property type="entry name" value="CARBOHYDRATE KINASE PFKB DOMAIN-CONTAINING PROTEIN"/>
    <property type="match status" value="1"/>
</dbReference>
<dbReference type="PANTHER" id="PTHR42909">
    <property type="entry name" value="ZGC:136858"/>
    <property type="match status" value="1"/>
</dbReference>
<dbReference type="Pfam" id="PF04227">
    <property type="entry name" value="Indigoidine_A"/>
    <property type="match status" value="1"/>
</dbReference>
<dbReference type="SUPFAM" id="SSF110581">
    <property type="entry name" value="Indigoidine synthase A-like"/>
    <property type="match status" value="1"/>
</dbReference>
<comment type="function">
    <text evidence="1">Catalyzes the reversible cleavage of pseudouridine 5'-phosphate (PsiMP) to ribose 5-phosphate and uracil. Functions biologically in the cleavage direction, as part of a pseudouridine degradation pathway.</text>
</comment>
<comment type="catalytic activity">
    <reaction evidence="1">
        <text>D-ribose 5-phosphate + uracil = psi-UMP + H2O</text>
        <dbReference type="Rhea" id="RHEA:18337"/>
        <dbReference type="ChEBI" id="CHEBI:15377"/>
        <dbReference type="ChEBI" id="CHEBI:17568"/>
        <dbReference type="ChEBI" id="CHEBI:58380"/>
        <dbReference type="ChEBI" id="CHEBI:78346"/>
        <dbReference type="EC" id="4.2.1.70"/>
    </reaction>
</comment>
<comment type="cofactor">
    <cofactor evidence="1">
        <name>Mn(2+)</name>
        <dbReference type="ChEBI" id="CHEBI:29035"/>
    </cofactor>
    <text evidence="1">Binds 1 Mn(2+) ion per subunit.</text>
</comment>
<comment type="subunit">
    <text evidence="1">Homotrimer.</text>
</comment>
<comment type="similarity">
    <text evidence="1">Belongs to the pseudouridine-5'-phosphate glycosidase family.</text>
</comment>
<proteinExistence type="inferred from homology"/>
<protein>
    <recommendedName>
        <fullName evidence="1">Pseudouridine-5'-phosphate glycosidase</fullName>
        <shortName evidence="1">PsiMP glycosidase</shortName>
        <ecNumber evidence="1">4.2.1.70</ecNumber>
    </recommendedName>
</protein>